<keyword id="KW-0963">Cytoplasm</keyword>
<keyword id="KW-0378">Hydrolase</keyword>
<keyword id="KW-1185">Reference proteome</keyword>
<keyword id="KW-0694">RNA-binding</keyword>
<keyword id="KW-0820">tRNA-binding</keyword>
<reference key="1">
    <citation type="submission" date="2003-10" db="EMBL/GenBank/DDBJ databases">
        <title>The complete genome sequence of the alkaliphilic Bacillus clausii KSM-K16.</title>
        <authorList>
            <person name="Takaki Y."/>
            <person name="Kageyama Y."/>
            <person name="Shimamura S."/>
            <person name="Suzuki H."/>
            <person name="Nishi S."/>
            <person name="Hatada Y."/>
            <person name="Kawai S."/>
            <person name="Ito S."/>
            <person name="Horikoshi K."/>
        </authorList>
    </citation>
    <scope>NUCLEOTIDE SEQUENCE [LARGE SCALE GENOMIC DNA]</scope>
    <source>
        <strain>KSM-K16</strain>
    </source>
</reference>
<comment type="function">
    <text evidence="1">An aminoacyl-tRNA editing enzyme that deacylates mischarged D-aminoacyl-tRNAs. Also deacylates mischarged glycyl-tRNA(Ala), protecting cells against glycine mischarging by AlaRS. Acts via tRNA-based rather than protein-based catalysis; rejects L-amino acids rather than detecting D-amino acids in the active site. By recycling D-aminoacyl-tRNA to D-amino acids and free tRNA molecules, this enzyme counteracts the toxicity associated with the formation of D-aminoacyl-tRNA entities in vivo and helps enforce protein L-homochirality.</text>
</comment>
<comment type="catalytic activity">
    <reaction evidence="1">
        <text>glycyl-tRNA(Ala) + H2O = tRNA(Ala) + glycine + H(+)</text>
        <dbReference type="Rhea" id="RHEA:53744"/>
        <dbReference type="Rhea" id="RHEA-COMP:9657"/>
        <dbReference type="Rhea" id="RHEA-COMP:13640"/>
        <dbReference type="ChEBI" id="CHEBI:15377"/>
        <dbReference type="ChEBI" id="CHEBI:15378"/>
        <dbReference type="ChEBI" id="CHEBI:57305"/>
        <dbReference type="ChEBI" id="CHEBI:78442"/>
        <dbReference type="ChEBI" id="CHEBI:78522"/>
        <dbReference type="EC" id="3.1.1.96"/>
    </reaction>
</comment>
<comment type="catalytic activity">
    <reaction evidence="1">
        <text>a D-aminoacyl-tRNA + H2O = a tRNA + a D-alpha-amino acid + H(+)</text>
        <dbReference type="Rhea" id="RHEA:13953"/>
        <dbReference type="Rhea" id="RHEA-COMP:10123"/>
        <dbReference type="Rhea" id="RHEA-COMP:10124"/>
        <dbReference type="ChEBI" id="CHEBI:15377"/>
        <dbReference type="ChEBI" id="CHEBI:15378"/>
        <dbReference type="ChEBI" id="CHEBI:59871"/>
        <dbReference type="ChEBI" id="CHEBI:78442"/>
        <dbReference type="ChEBI" id="CHEBI:79333"/>
        <dbReference type="EC" id="3.1.1.96"/>
    </reaction>
</comment>
<comment type="subunit">
    <text evidence="1">Homodimer.</text>
</comment>
<comment type="subcellular location">
    <subcellularLocation>
        <location evidence="1">Cytoplasm</location>
    </subcellularLocation>
</comment>
<comment type="domain">
    <text evidence="1">A Gly-cisPro motif from one monomer fits into the active site of the other monomer to allow specific chiral rejection of L-amino acids.</text>
</comment>
<comment type="similarity">
    <text evidence="1">Belongs to the DTD family.</text>
</comment>
<accession>Q5WHP9</accession>
<feature type="chain" id="PRO_0000164522" description="D-aminoacyl-tRNA deacylase">
    <location>
        <begin position="1"/>
        <end position="146"/>
    </location>
</feature>
<feature type="short sequence motif" description="Gly-cisPro motif, important for rejection of L-amino acids" evidence="1">
    <location>
        <begin position="137"/>
        <end position="138"/>
    </location>
</feature>
<organism>
    <name type="scientific">Shouchella clausii (strain KSM-K16)</name>
    <name type="common">Alkalihalobacillus clausii</name>
    <dbReference type="NCBI Taxonomy" id="66692"/>
    <lineage>
        <taxon>Bacteria</taxon>
        <taxon>Bacillati</taxon>
        <taxon>Bacillota</taxon>
        <taxon>Bacilli</taxon>
        <taxon>Bacillales</taxon>
        <taxon>Bacillaceae</taxon>
        <taxon>Shouchella</taxon>
    </lineage>
</organism>
<evidence type="ECO:0000255" key="1">
    <source>
        <dbReference type="HAMAP-Rule" id="MF_00518"/>
    </source>
</evidence>
<gene>
    <name evidence="1" type="primary">dtd</name>
    <name type="ordered locus">ABC1571</name>
</gene>
<dbReference type="EC" id="3.1.1.96" evidence="1"/>
<dbReference type="EMBL" id="AP006627">
    <property type="protein sequence ID" value="BAD64106.1"/>
    <property type="molecule type" value="Genomic_DNA"/>
</dbReference>
<dbReference type="RefSeq" id="WP_011246415.1">
    <property type="nucleotide sequence ID" value="NC_006582.1"/>
</dbReference>
<dbReference type="SMR" id="Q5WHP9"/>
<dbReference type="STRING" id="66692.ABC1571"/>
<dbReference type="KEGG" id="bcl:ABC1571"/>
<dbReference type="eggNOG" id="COG1490">
    <property type="taxonomic scope" value="Bacteria"/>
</dbReference>
<dbReference type="HOGENOM" id="CLU_076901_1_0_9"/>
<dbReference type="OrthoDB" id="9801395at2"/>
<dbReference type="Proteomes" id="UP000001168">
    <property type="component" value="Chromosome"/>
</dbReference>
<dbReference type="GO" id="GO:0005737">
    <property type="term" value="C:cytoplasm"/>
    <property type="evidence" value="ECO:0007669"/>
    <property type="project" value="UniProtKB-SubCell"/>
</dbReference>
<dbReference type="GO" id="GO:0051500">
    <property type="term" value="F:D-tyrosyl-tRNA(Tyr) deacylase activity"/>
    <property type="evidence" value="ECO:0007669"/>
    <property type="project" value="TreeGrafter"/>
</dbReference>
<dbReference type="GO" id="GO:0106026">
    <property type="term" value="F:Gly-tRNA(Ala) deacylase activity"/>
    <property type="evidence" value="ECO:0007669"/>
    <property type="project" value="UniProtKB-UniRule"/>
</dbReference>
<dbReference type="GO" id="GO:0043908">
    <property type="term" value="F:Ser(Gly)-tRNA(Ala) hydrolase activity"/>
    <property type="evidence" value="ECO:0007669"/>
    <property type="project" value="UniProtKB-UniRule"/>
</dbReference>
<dbReference type="GO" id="GO:0000049">
    <property type="term" value="F:tRNA binding"/>
    <property type="evidence" value="ECO:0007669"/>
    <property type="project" value="UniProtKB-UniRule"/>
</dbReference>
<dbReference type="GO" id="GO:0019478">
    <property type="term" value="P:D-amino acid catabolic process"/>
    <property type="evidence" value="ECO:0007669"/>
    <property type="project" value="UniProtKB-UniRule"/>
</dbReference>
<dbReference type="CDD" id="cd00563">
    <property type="entry name" value="Dtyr_deacylase"/>
    <property type="match status" value="1"/>
</dbReference>
<dbReference type="FunFam" id="3.50.80.10:FF:000001">
    <property type="entry name" value="D-aminoacyl-tRNA deacylase"/>
    <property type="match status" value="1"/>
</dbReference>
<dbReference type="Gene3D" id="3.50.80.10">
    <property type="entry name" value="D-tyrosyl-tRNA(Tyr) deacylase"/>
    <property type="match status" value="1"/>
</dbReference>
<dbReference type="HAMAP" id="MF_00518">
    <property type="entry name" value="Deacylase_Dtd"/>
    <property type="match status" value="1"/>
</dbReference>
<dbReference type="InterPro" id="IPR003732">
    <property type="entry name" value="Daa-tRNA_deacyls_DTD"/>
</dbReference>
<dbReference type="InterPro" id="IPR023509">
    <property type="entry name" value="DTD-like_sf"/>
</dbReference>
<dbReference type="NCBIfam" id="TIGR00256">
    <property type="entry name" value="D-aminoacyl-tRNA deacylase"/>
    <property type="match status" value="1"/>
</dbReference>
<dbReference type="PANTHER" id="PTHR10472:SF5">
    <property type="entry name" value="D-AMINOACYL-TRNA DEACYLASE 1"/>
    <property type="match status" value="1"/>
</dbReference>
<dbReference type="PANTHER" id="PTHR10472">
    <property type="entry name" value="D-TYROSYL-TRNA TYR DEACYLASE"/>
    <property type="match status" value="1"/>
</dbReference>
<dbReference type="Pfam" id="PF02580">
    <property type="entry name" value="Tyr_Deacylase"/>
    <property type="match status" value="1"/>
</dbReference>
<dbReference type="SUPFAM" id="SSF69500">
    <property type="entry name" value="DTD-like"/>
    <property type="match status" value="1"/>
</dbReference>
<proteinExistence type="inferred from homology"/>
<protein>
    <recommendedName>
        <fullName evidence="1">D-aminoacyl-tRNA deacylase</fullName>
        <shortName evidence="1">DTD</shortName>
        <ecNumber evidence="1">3.1.1.96</ecNumber>
    </recommendedName>
    <alternativeName>
        <fullName evidence="1">Gly-tRNA(Ala) deacylase</fullName>
    </alternativeName>
</protein>
<name>DTD_SHOC1</name>
<sequence>MRVLVQRAKRGSVRVDQKTVGDIGPGLVLLVGIHQEDTEADVRFCAEKVAHLRIFEDSSAKMNESVLDQGGSVLSISQFTLYGDCKKGRRPNFMRAAKPEKAKLLYERFNSYLRELGLVVETGEFGAMMEVELINDGPVTILVESE</sequence>